<protein>
    <recommendedName>
        <fullName>Probable phosphatidylinositol 3,4,5-trisphosphate 3-phosphatase TEP1</fullName>
        <ecNumber>3.1.3.67</ecNumber>
    </recommendedName>
</protein>
<evidence type="ECO:0000255" key="1">
    <source>
        <dbReference type="PROSITE-ProRule" id="PRU00590"/>
    </source>
</evidence>
<evidence type="ECO:0000269" key="2">
    <source>
    </source>
</evidence>
<name>TEP1_YEAST</name>
<feature type="chain" id="PRO_0000215906" description="Probable phosphatidylinositol 3,4,5-trisphosphate 3-phosphatase TEP1">
    <location>
        <begin position="1"/>
        <end position="434"/>
    </location>
</feature>
<feature type="domain" description="Phosphatase tensin-type" evidence="1">
    <location>
        <begin position="33"/>
        <end position="255"/>
    </location>
</feature>
<feature type="active site" description="Phosphocysteine intermediate" evidence="1">
    <location>
        <position position="193"/>
    </location>
</feature>
<organism>
    <name type="scientific">Saccharomyces cerevisiae (strain ATCC 204508 / S288c)</name>
    <name type="common">Baker's yeast</name>
    <dbReference type="NCBI Taxonomy" id="559292"/>
    <lineage>
        <taxon>Eukaryota</taxon>
        <taxon>Fungi</taxon>
        <taxon>Dikarya</taxon>
        <taxon>Ascomycota</taxon>
        <taxon>Saccharomycotina</taxon>
        <taxon>Saccharomycetes</taxon>
        <taxon>Saccharomycetales</taxon>
        <taxon>Saccharomycetaceae</taxon>
        <taxon>Saccharomyces</taxon>
    </lineage>
</organism>
<accession>P53916</accession>
<accession>D6W155</accession>
<keyword id="KW-0378">Hydrolase</keyword>
<keyword id="KW-1185">Reference proteome</keyword>
<reference key="1">
    <citation type="journal article" date="1995" name="Yeast">
        <title>A 43.5 kb segment of yeast chromosome XIV, which contains MFA2, MEP2, CAP/SRV2, NAM9, FKB1/FPR1/RBP1, MOM22 and CPT1, predicts an adenosine deaminase gene and 14 new open reading frames.</title>
        <authorList>
            <person name="Mallet L."/>
            <person name="Bussereau F."/>
            <person name="Jacquet M."/>
        </authorList>
    </citation>
    <scope>NUCLEOTIDE SEQUENCE [GENOMIC DNA]</scope>
    <source>
        <strain>ATCC 204508 / S288c</strain>
    </source>
</reference>
<reference key="2">
    <citation type="journal article" date="1997" name="Nature">
        <title>The nucleotide sequence of Saccharomyces cerevisiae chromosome XIV and its evolutionary implications.</title>
        <authorList>
            <person name="Philippsen P."/>
            <person name="Kleine K."/>
            <person name="Poehlmann R."/>
            <person name="Duesterhoeft A."/>
            <person name="Hamberg K."/>
            <person name="Hegemann J.H."/>
            <person name="Obermaier B."/>
            <person name="Urrestarazu L.A."/>
            <person name="Aert R."/>
            <person name="Albermann K."/>
            <person name="Altmann R."/>
            <person name="Andre B."/>
            <person name="Baladron V."/>
            <person name="Ballesta J.P.G."/>
            <person name="Becam A.-M."/>
            <person name="Beinhauer J.D."/>
            <person name="Boskovic J."/>
            <person name="Buitrago M.J."/>
            <person name="Bussereau F."/>
            <person name="Coster F."/>
            <person name="Crouzet M."/>
            <person name="D'Angelo M."/>
            <person name="Dal Pero F."/>
            <person name="De Antoni A."/>
            <person name="del Rey F."/>
            <person name="Doignon F."/>
            <person name="Domdey H."/>
            <person name="Dubois E."/>
            <person name="Fiedler T.A."/>
            <person name="Fleig U."/>
            <person name="Floeth M."/>
            <person name="Fritz C."/>
            <person name="Gaillardin C."/>
            <person name="Garcia-Cantalejo J.M."/>
            <person name="Glansdorff N."/>
            <person name="Goffeau A."/>
            <person name="Gueldener U."/>
            <person name="Herbert C.J."/>
            <person name="Heumann K."/>
            <person name="Heuss-Neitzel D."/>
            <person name="Hilbert H."/>
            <person name="Hinni K."/>
            <person name="Iraqui Houssaini I."/>
            <person name="Jacquet M."/>
            <person name="Jimenez A."/>
            <person name="Jonniaux J.-L."/>
            <person name="Karpfinger-Hartl L."/>
            <person name="Lanfranchi G."/>
            <person name="Lepingle A."/>
            <person name="Levesque H."/>
            <person name="Lyck R."/>
            <person name="Maftahi M."/>
            <person name="Mallet L."/>
            <person name="Maurer C.T.C."/>
            <person name="Messenguy F."/>
            <person name="Mewes H.-W."/>
            <person name="Moestl D."/>
            <person name="Nasr F."/>
            <person name="Nicaud J.-M."/>
            <person name="Niedenthal R.K."/>
            <person name="Pandolfo D."/>
            <person name="Pierard A."/>
            <person name="Piravandi E."/>
            <person name="Planta R.J."/>
            <person name="Pohl T.M."/>
            <person name="Purnelle B."/>
            <person name="Rebischung C."/>
            <person name="Remacha M.A."/>
            <person name="Revuelta J.L."/>
            <person name="Rinke M."/>
            <person name="Saiz J.E."/>
            <person name="Sartorello F."/>
            <person name="Scherens B."/>
            <person name="Sen-Gupta M."/>
            <person name="Soler-Mira A."/>
            <person name="Urbanus J.H.M."/>
            <person name="Valle G."/>
            <person name="Van Dyck L."/>
            <person name="Verhasselt P."/>
            <person name="Vierendeels F."/>
            <person name="Vissers S."/>
            <person name="Voet M."/>
            <person name="Volckaert G."/>
            <person name="Wach A."/>
            <person name="Wambutt R."/>
            <person name="Wedler H."/>
            <person name="Zollner A."/>
            <person name="Hani J."/>
        </authorList>
    </citation>
    <scope>NUCLEOTIDE SEQUENCE [LARGE SCALE GENOMIC DNA]</scope>
    <source>
        <strain>ATCC 204508 / S288c</strain>
    </source>
</reference>
<reference key="3">
    <citation type="journal article" date="2014" name="G3 (Bethesda)">
        <title>The reference genome sequence of Saccharomyces cerevisiae: Then and now.</title>
        <authorList>
            <person name="Engel S.R."/>
            <person name="Dietrich F.S."/>
            <person name="Fisk D.G."/>
            <person name="Binkley G."/>
            <person name="Balakrishnan R."/>
            <person name="Costanzo M.C."/>
            <person name="Dwight S.S."/>
            <person name="Hitz B.C."/>
            <person name="Karra K."/>
            <person name="Nash R.S."/>
            <person name="Weng S."/>
            <person name="Wong E.D."/>
            <person name="Lloyd P."/>
            <person name="Skrzypek M.S."/>
            <person name="Miyasato S.R."/>
            <person name="Simison M."/>
            <person name="Cherry J.M."/>
        </authorList>
    </citation>
    <scope>GENOME REANNOTATION</scope>
    <source>
        <strain>ATCC 204508 / S288c</strain>
    </source>
</reference>
<reference key="4">
    <citation type="journal article" date="2000" name="Proc. Natl. Acad. Sci. U.S.A.">
        <title>TEP1, the yeast homolog of the human tumor suppressor gene PTEN/MMAC1/TEP1, is linked to the phosphatidylinositol pathway and plays a role in the developmental process of sporulation.</title>
        <authorList>
            <person name="Heymont J."/>
            <person name="Berenfeld L."/>
            <person name="Collins J."/>
            <person name="Kaganovich A."/>
            <person name="Maynes B."/>
            <person name="Moulin A."/>
            <person name="Ratskovskaya I."/>
            <person name="Poon P.P."/>
            <person name="Johnston G.C."/>
            <person name="Kamenetsky M."/>
            <person name="DeSilva J."/>
            <person name="Sun H."/>
            <person name="Petsko G.A."/>
            <person name="Engebrecht J."/>
        </authorList>
    </citation>
    <scope>FUNCTION</scope>
</reference>
<comment type="function">
    <text evidence="2">May act as a phosphoinositide 3-phosphatase by regulating PtdIns(3,4,5)P3 levels.</text>
</comment>
<comment type="catalytic activity">
    <reaction>
        <text>a 1,2-diacyl-sn-glycero-3-phospho-(1D-myo-inositol-3,4,5-trisphosphate) + H2O = a 1,2-diacyl-sn-glycero-3-phospho-(1D-myo-inositol-4,5-bisphosphate) + phosphate</text>
        <dbReference type="Rhea" id="RHEA:25017"/>
        <dbReference type="ChEBI" id="CHEBI:15377"/>
        <dbReference type="ChEBI" id="CHEBI:43474"/>
        <dbReference type="ChEBI" id="CHEBI:57836"/>
        <dbReference type="ChEBI" id="CHEBI:58456"/>
        <dbReference type="EC" id="3.1.3.67"/>
    </reaction>
</comment>
<dbReference type="EC" id="3.1.3.67"/>
<dbReference type="EMBL" id="Z46843">
    <property type="protein sequence ID" value="CAA86897.1"/>
    <property type="molecule type" value="Genomic_DNA"/>
</dbReference>
<dbReference type="EMBL" id="Z71404">
    <property type="protein sequence ID" value="CAA96010.1"/>
    <property type="molecule type" value="Genomic_DNA"/>
</dbReference>
<dbReference type="EMBL" id="BK006947">
    <property type="protein sequence ID" value="DAA10421.1"/>
    <property type="molecule type" value="Genomic_DNA"/>
</dbReference>
<dbReference type="PIR" id="S55155">
    <property type="entry name" value="S55155"/>
</dbReference>
<dbReference type="RefSeq" id="NP_014271.3">
    <property type="nucleotide sequence ID" value="NM_001182966.4"/>
</dbReference>
<dbReference type="SMR" id="P53916"/>
<dbReference type="BioGRID" id="35699">
    <property type="interactions" value="123"/>
</dbReference>
<dbReference type="DIP" id="DIP-4928N"/>
<dbReference type="FunCoup" id="P53916">
    <property type="interactions" value="69"/>
</dbReference>
<dbReference type="IntAct" id="P53916">
    <property type="interactions" value="12"/>
</dbReference>
<dbReference type="MINT" id="P53916"/>
<dbReference type="STRING" id="4932.YNL128W"/>
<dbReference type="iPTMnet" id="P53916"/>
<dbReference type="PaxDb" id="4932-YNL128W"/>
<dbReference type="PeptideAtlas" id="P53916"/>
<dbReference type="EnsemblFungi" id="YNL128W_mRNA">
    <property type="protein sequence ID" value="YNL128W"/>
    <property type="gene ID" value="YNL128W"/>
</dbReference>
<dbReference type="GeneID" id="855595"/>
<dbReference type="KEGG" id="sce:YNL128W"/>
<dbReference type="AGR" id="SGD:S000005072"/>
<dbReference type="SGD" id="S000005072">
    <property type="gene designation" value="TEP1"/>
</dbReference>
<dbReference type="VEuPathDB" id="FungiDB:YNL128W"/>
<dbReference type="eggNOG" id="KOG2283">
    <property type="taxonomic scope" value="Eukaryota"/>
</dbReference>
<dbReference type="GeneTree" id="ENSGT00940000154335"/>
<dbReference type="HOGENOM" id="CLU_020105_0_0_1"/>
<dbReference type="InParanoid" id="P53916"/>
<dbReference type="OMA" id="CWLNLYW"/>
<dbReference type="OrthoDB" id="16692at2759"/>
<dbReference type="BioCyc" id="YEAST:G3O-33149-MONOMER"/>
<dbReference type="Reactome" id="R-SCE-1660499">
    <property type="pathway name" value="Synthesis of PIPs at the plasma membrane"/>
</dbReference>
<dbReference type="Reactome" id="R-SCE-1660514">
    <property type="pathway name" value="Synthesis of PIPs at the Golgi membrane"/>
</dbReference>
<dbReference type="Reactome" id="R-SCE-1855204">
    <property type="pathway name" value="Synthesis of IP3 and IP4 in the cytosol"/>
</dbReference>
<dbReference type="Reactome" id="R-SCE-199418">
    <property type="pathway name" value="Negative regulation of the PI3K/AKT network"/>
</dbReference>
<dbReference type="Reactome" id="R-SCE-202424">
    <property type="pathway name" value="Downstream TCR signaling"/>
</dbReference>
<dbReference type="Reactome" id="R-SCE-5689880">
    <property type="pathway name" value="Ub-specific processing proteases"/>
</dbReference>
<dbReference type="Reactome" id="R-SCE-8948747">
    <property type="pathway name" value="Regulation of PTEN localization"/>
</dbReference>
<dbReference type="Reactome" id="R-SCE-8948751">
    <property type="pathway name" value="Regulation of PTEN stability and activity"/>
</dbReference>
<dbReference type="BioGRID-ORCS" id="855595">
    <property type="hits" value="0 hits in 10 CRISPR screens"/>
</dbReference>
<dbReference type="PRO" id="PR:P53916"/>
<dbReference type="Proteomes" id="UP000002311">
    <property type="component" value="Chromosome XIV"/>
</dbReference>
<dbReference type="RNAct" id="P53916">
    <property type="molecule type" value="protein"/>
</dbReference>
<dbReference type="GO" id="GO:0042995">
    <property type="term" value="C:cell projection"/>
    <property type="evidence" value="ECO:0000318"/>
    <property type="project" value="GO_Central"/>
</dbReference>
<dbReference type="GO" id="GO:0005737">
    <property type="term" value="C:cytoplasm"/>
    <property type="evidence" value="ECO:0000314"/>
    <property type="project" value="SGD"/>
</dbReference>
<dbReference type="GO" id="GO:0005829">
    <property type="term" value="C:cytosol"/>
    <property type="evidence" value="ECO:0000318"/>
    <property type="project" value="GO_Central"/>
</dbReference>
<dbReference type="GO" id="GO:0005634">
    <property type="term" value="C:nucleus"/>
    <property type="evidence" value="ECO:0000318"/>
    <property type="project" value="GO_Central"/>
</dbReference>
<dbReference type="GO" id="GO:0005886">
    <property type="term" value="C:plasma membrane"/>
    <property type="evidence" value="ECO:0000318"/>
    <property type="project" value="GO_Central"/>
</dbReference>
<dbReference type="GO" id="GO:0016314">
    <property type="term" value="F:phosphatidylinositol-3,4,5-trisphosphate 3-phosphatase activity"/>
    <property type="evidence" value="ECO:0000318"/>
    <property type="project" value="GO_Central"/>
</dbReference>
<dbReference type="GO" id="GO:0004725">
    <property type="term" value="F:protein tyrosine phosphatase activity"/>
    <property type="evidence" value="ECO:0000318"/>
    <property type="project" value="GO_Central"/>
</dbReference>
<dbReference type="GO" id="GO:0030476">
    <property type="term" value="P:ascospore wall assembly"/>
    <property type="evidence" value="ECO:0000315"/>
    <property type="project" value="SGD"/>
</dbReference>
<dbReference type="GO" id="GO:0043491">
    <property type="term" value="P:phosphatidylinositol 3-kinase/protein kinase B signal transduction"/>
    <property type="evidence" value="ECO:0000318"/>
    <property type="project" value="GO_Central"/>
</dbReference>
<dbReference type="GO" id="GO:0046856">
    <property type="term" value="P:phosphatidylinositol dephosphorylation"/>
    <property type="evidence" value="ECO:0000318"/>
    <property type="project" value="GO_Central"/>
</dbReference>
<dbReference type="GO" id="GO:0051896">
    <property type="term" value="P:regulation of phosphatidylinositol 3-kinase/protein kinase B signal transduction"/>
    <property type="evidence" value="ECO:0000318"/>
    <property type="project" value="GO_Central"/>
</dbReference>
<dbReference type="CDD" id="cd14497">
    <property type="entry name" value="PTP_PTEN-like"/>
    <property type="match status" value="1"/>
</dbReference>
<dbReference type="Gene3D" id="3.90.190.10">
    <property type="entry name" value="Protein tyrosine phosphatase superfamily"/>
    <property type="match status" value="1"/>
</dbReference>
<dbReference type="InterPro" id="IPR000340">
    <property type="entry name" value="Dual-sp_phosphatase_cat-dom"/>
</dbReference>
<dbReference type="InterPro" id="IPR051281">
    <property type="entry name" value="Dual-spec_lipid-protein_phosph"/>
</dbReference>
<dbReference type="InterPro" id="IPR029021">
    <property type="entry name" value="Prot-tyrosine_phosphatase-like"/>
</dbReference>
<dbReference type="InterPro" id="IPR029023">
    <property type="entry name" value="Tensin_phosphatase"/>
</dbReference>
<dbReference type="InterPro" id="IPR016130">
    <property type="entry name" value="Tyr_Pase_AS"/>
</dbReference>
<dbReference type="InterPro" id="IPR000387">
    <property type="entry name" value="Tyr_Pase_dom"/>
</dbReference>
<dbReference type="PANTHER" id="PTHR12305">
    <property type="entry name" value="PHOSPHATASE WITH HOMOLOGY TO TENSIN"/>
    <property type="match status" value="1"/>
</dbReference>
<dbReference type="PANTHER" id="PTHR12305:SF81">
    <property type="entry name" value="PHOSPHATIDYLINOSITOL 3,4,5-TRISPHOSPHATE 3-PHOSPHATASE AND DUAL-SPECIFICITY PROTEIN PHOSPHATASE PTEN"/>
    <property type="match status" value="1"/>
</dbReference>
<dbReference type="Pfam" id="PF00782">
    <property type="entry name" value="DSPc"/>
    <property type="match status" value="1"/>
</dbReference>
<dbReference type="SUPFAM" id="SSF52799">
    <property type="entry name" value="(Phosphotyrosine protein) phosphatases II"/>
    <property type="match status" value="1"/>
</dbReference>
<dbReference type="PROSITE" id="PS51181">
    <property type="entry name" value="PPASE_TENSIN"/>
    <property type="match status" value="1"/>
</dbReference>
<gene>
    <name type="primary">TEP1</name>
    <name type="ordered locus">YNL128W</name>
    <name type="ORF">N1220</name>
    <name type="ORF">N1872</name>
</gene>
<sequence length="434" mass="50152">MREEGSELEMEKGFLKWKPVNLMKKILSLPMKKTKNDIGLRLDISYILVNLIVCSYPVNTYPKLLYRNSLDDLILFLTVYHGKGNFRIFNFRGEKEDSDYKDNDLIGIAAKFESKDFEIQELRSTLINDGKIPISPIDLETRTLVEEETNNVICERIGWLDHFPPPFELLEEIVDGIENYLSVSKNRVAVLHCRMGKGRSGMITVAYLMKYLQCPLGEARLIFMQARFKYGMTNGVTIPSQLRYLRYHEFFITHEKAAQEGISNEAVKFKFKFRLAKMTFLRPSSLITSESAIVTTKIQHYNDDRNALLTRKVVYSDIMAHECGGNMTFIFGRDYLTLENDCRIEFTLGTSKSKAASSIISWTSCASCWLNIYLETLMHIIKDDSSPDYFQVERLKRDEMLGTTISWQELDGFGELSTHGLKLFQALKLEWEII</sequence>
<proteinExistence type="predicted"/>